<organism>
    <name type="scientific">Eremothecium gossypii (strain ATCC 10895 / CBS 109.51 / FGSC 9923 / NRRL Y-1056)</name>
    <name type="common">Yeast</name>
    <name type="synonym">Ashbya gossypii</name>
    <dbReference type="NCBI Taxonomy" id="284811"/>
    <lineage>
        <taxon>Eukaryota</taxon>
        <taxon>Fungi</taxon>
        <taxon>Dikarya</taxon>
        <taxon>Ascomycota</taxon>
        <taxon>Saccharomycotina</taxon>
        <taxon>Saccharomycetes</taxon>
        <taxon>Saccharomycetales</taxon>
        <taxon>Saccharomycetaceae</taxon>
        <taxon>Eremothecium</taxon>
    </lineage>
</organism>
<keyword id="KW-0507">mRNA processing</keyword>
<keyword id="KW-0539">Nucleus</keyword>
<keyword id="KW-1185">Reference proteome</keyword>
<keyword id="KW-0804">Transcription</keyword>
<sequence>MSEREASEPISEQGVSDNGDTFAAEGSQMKRRLSEVDGESRGAVDDALEGSNSDGDEDEDEDEDEDEDEDGEGPHKKQRRERNRFLDIEAEVSDDEEDDEDDEDSELVREGFITHGDEDEEEDDAQGSKDDRLHRQLDQDLQKSSEEDAQKLAKELRERYGRSSSKQYRAAAQDGYVPQRFMLPSVDTATVWGVRCRPGKEKDLVKKLLKKKFNLDKSMGSKKLKILSIFQRDSFSGRIYIEAPKQSVIEKFCNGVPDIYVNQKLLIPVQELPLLLKPSKSDDVRLEPGSYVRIKRGIYKGDLAVVEQLSDNNLECMLKVVPRLDYGKNDEVDPDTQQKKAKKVSFAQRPPPQLFNPTMALRMDQANLYKRDEKHFTYRNEDYIDGYLIKVFKIQYLKTANIHPTVEELARFGSKDGAVDLTTISQTIKKAQASKAMFQPGDRVEILNGEQRGSKGYVTRTSTDIISVSLTGFNAKPLGFPVSSLRKIFEPGDHVSVMSGDHQGDAGLVLIVKNGQVTFVSDQTRENLTISANNLTKSMDSTPTSSDYALHDIVELSAKNVACVIQAGHDIFKVLDDSGKVSTVTKGSILKKINTTRSRIAAVDGNGKEIKIGDTVVEKVGARREGQVLYVQSHQIFIVSKKIVENAGVFVVNPMNVEAVASRENLIASKLDLTKMNPEIAAKMGPPSQTAQPVSVGRDVALNKTVRIRSAGYKGQLGIVKDVNGDMATVELHSKNKHITVDKRKLTYFNHEGGDGITYDELVSRRGRMPHARLGPSYVSAPRTMATGAPGAAPALSGGMTPGWSYFDGGKTPAVGSHGAGAASAWGGASSWGGQGGGATSTWGGQPGNVSTWGGQTGATSTWGGASTWGNKSTWGGASTWASGGENGAASTWGGGDRSAYGGASTWGAAGGASAWGGNKSHHRPDGSNSTWGTAPQGNRSAWGDQPAGSGSSWGGAR</sequence>
<feature type="chain" id="PRO_0000238554" description="Transcription elongation factor SPT5">
    <location>
        <begin position="1"/>
        <end position="958"/>
    </location>
</feature>
<feature type="region of interest" description="Disordered" evidence="2">
    <location>
        <begin position="1"/>
        <end position="131"/>
    </location>
</feature>
<feature type="region of interest" description="Disordered" evidence="2">
    <location>
        <begin position="825"/>
        <end position="891"/>
    </location>
</feature>
<feature type="region of interest" description="Disordered" evidence="2">
    <location>
        <begin position="911"/>
        <end position="958"/>
    </location>
</feature>
<feature type="compositionally biased region" description="Basic and acidic residues" evidence="2">
    <location>
        <begin position="32"/>
        <end position="44"/>
    </location>
</feature>
<feature type="compositionally biased region" description="Acidic residues" evidence="2">
    <location>
        <begin position="54"/>
        <end position="71"/>
    </location>
</feature>
<feature type="compositionally biased region" description="Acidic residues" evidence="2">
    <location>
        <begin position="88"/>
        <end position="105"/>
    </location>
</feature>
<feature type="compositionally biased region" description="Gly residues" evidence="2">
    <location>
        <begin position="830"/>
        <end position="839"/>
    </location>
</feature>
<feature type="compositionally biased region" description="Low complexity" evidence="2">
    <location>
        <begin position="851"/>
        <end position="870"/>
    </location>
</feature>
<feature type="compositionally biased region" description="Polar residues" evidence="2">
    <location>
        <begin position="871"/>
        <end position="882"/>
    </location>
</feature>
<feature type="compositionally biased region" description="Polar residues" evidence="2">
    <location>
        <begin position="927"/>
        <end position="940"/>
    </location>
</feature>
<reference key="1">
    <citation type="journal article" date="2004" name="Science">
        <title>The Ashbya gossypii genome as a tool for mapping the ancient Saccharomyces cerevisiae genome.</title>
        <authorList>
            <person name="Dietrich F.S."/>
            <person name="Voegeli S."/>
            <person name="Brachat S."/>
            <person name="Lerch A."/>
            <person name="Gates K."/>
            <person name="Steiner S."/>
            <person name="Mohr C."/>
            <person name="Poehlmann R."/>
            <person name="Luedi P."/>
            <person name="Choi S."/>
            <person name="Wing R.A."/>
            <person name="Flavier A."/>
            <person name="Gaffney T.D."/>
            <person name="Philippsen P."/>
        </authorList>
    </citation>
    <scope>NUCLEOTIDE SEQUENCE [LARGE SCALE GENOMIC DNA]</scope>
    <source>
        <strain>ATCC 10895 / CBS 109.51 / FGSC 9923 / NRRL Y-1056</strain>
    </source>
</reference>
<reference key="2">
    <citation type="journal article" date="2013" name="G3 (Bethesda)">
        <title>Genomes of Ashbya fungi isolated from insects reveal four mating-type loci, numerous translocations, lack of transposons, and distinct gene duplications.</title>
        <authorList>
            <person name="Dietrich F.S."/>
            <person name="Voegeli S."/>
            <person name="Kuo S."/>
            <person name="Philippsen P."/>
        </authorList>
    </citation>
    <scope>GENOME REANNOTATION</scope>
    <scope>SEQUENCE REVISION TO 635-650 AND 660</scope>
    <source>
        <strain>ATCC 10895 / CBS 109.51 / FGSC 9923 / NRRL Y-1056</strain>
    </source>
</reference>
<name>SPT5_EREGS</name>
<dbReference type="EMBL" id="AE016817">
    <property type="protein sequence ID" value="AAS52107.2"/>
    <property type="molecule type" value="Genomic_DNA"/>
</dbReference>
<dbReference type="RefSeq" id="NP_984283.2">
    <property type="nucleotide sequence ID" value="NM_209636.2"/>
</dbReference>
<dbReference type="SMR" id="Q759T6"/>
<dbReference type="FunCoup" id="Q759T6">
    <property type="interactions" value="1485"/>
</dbReference>
<dbReference type="STRING" id="284811.Q759T6"/>
<dbReference type="EnsemblFungi" id="AAS52107">
    <property type="protein sequence ID" value="AAS52107"/>
    <property type="gene ID" value="AGOS_ADR187W"/>
</dbReference>
<dbReference type="GeneID" id="4620445"/>
<dbReference type="KEGG" id="ago:AGOS_ADR187W"/>
<dbReference type="eggNOG" id="KOG1999">
    <property type="taxonomic scope" value="Eukaryota"/>
</dbReference>
<dbReference type="HOGENOM" id="CLU_003537_1_0_1"/>
<dbReference type="InParanoid" id="Q759T6"/>
<dbReference type="OMA" id="YPVGYMN"/>
<dbReference type="OrthoDB" id="28901at2759"/>
<dbReference type="Proteomes" id="UP000000591">
    <property type="component" value="Chromosome IV"/>
</dbReference>
<dbReference type="GO" id="GO:0032044">
    <property type="term" value="C:DSIF complex"/>
    <property type="evidence" value="ECO:0000318"/>
    <property type="project" value="GO_Central"/>
</dbReference>
<dbReference type="GO" id="GO:0033553">
    <property type="term" value="C:rDNA heterochromatin"/>
    <property type="evidence" value="ECO:0007669"/>
    <property type="project" value="EnsemblFungi"/>
</dbReference>
<dbReference type="GO" id="GO:0140463">
    <property type="term" value="F:chromatin-protein adaptor activity"/>
    <property type="evidence" value="ECO:0007669"/>
    <property type="project" value="EnsemblFungi"/>
</dbReference>
<dbReference type="GO" id="GO:0003677">
    <property type="term" value="F:DNA binding"/>
    <property type="evidence" value="ECO:0007669"/>
    <property type="project" value="EnsemblFungi"/>
</dbReference>
<dbReference type="GO" id="GO:0042393">
    <property type="term" value="F:histone binding"/>
    <property type="evidence" value="ECO:0007669"/>
    <property type="project" value="EnsemblFungi"/>
</dbReference>
<dbReference type="GO" id="GO:0003729">
    <property type="term" value="F:mRNA binding"/>
    <property type="evidence" value="ECO:0000318"/>
    <property type="project" value="GO_Central"/>
</dbReference>
<dbReference type="GO" id="GO:0001042">
    <property type="term" value="F:RNA polymerase I core binding"/>
    <property type="evidence" value="ECO:0007669"/>
    <property type="project" value="EnsemblFungi"/>
</dbReference>
<dbReference type="GO" id="GO:0001179">
    <property type="term" value="F:RNA polymerase I general transcription initiation factor binding"/>
    <property type="evidence" value="ECO:0007669"/>
    <property type="project" value="EnsemblFungi"/>
</dbReference>
<dbReference type="GO" id="GO:0000993">
    <property type="term" value="F:RNA polymerase II complex binding"/>
    <property type="evidence" value="ECO:0007669"/>
    <property type="project" value="EnsemblFungi"/>
</dbReference>
<dbReference type="GO" id="GO:0019843">
    <property type="term" value="F:rRNA binding"/>
    <property type="evidence" value="ECO:0007669"/>
    <property type="project" value="EnsemblFungi"/>
</dbReference>
<dbReference type="GO" id="GO:0003727">
    <property type="term" value="F:single-stranded RNA binding"/>
    <property type="evidence" value="ECO:0007669"/>
    <property type="project" value="EnsemblFungi"/>
</dbReference>
<dbReference type="GO" id="GO:0070990">
    <property type="term" value="F:snRNP binding"/>
    <property type="evidence" value="ECO:0007669"/>
    <property type="project" value="EnsemblFungi"/>
</dbReference>
<dbReference type="GO" id="GO:0003711">
    <property type="term" value="F:transcription elongation factor activity"/>
    <property type="evidence" value="ECO:0007669"/>
    <property type="project" value="EnsemblFungi"/>
</dbReference>
<dbReference type="GO" id="GO:0030619">
    <property type="term" value="F:U1 snRNA binding"/>
    <property type="evidence" value="ECO:0007669"/>
    <property type="project" value="EnsemblFungi"/>
</dbReference>
<dbReference type="GO" id="GO:0030620">
    <property type="term" value="F:U2 snRNA binding"/>
    <property type="evidence" value="ECO:0007669"/>
    <property type="project" value="EnsemblFungi"/>
</dbReference>
<dbReference type="GO" id="GO:0030621">
    <property type="term" value="F:U4 snRNA binding"/>
    <property type="evidence" value="ECO:0007669"/>
    <property type="project" value="EnsemblFungi"/>
</dbReference>
<dbReference type="GO" id="GO:0030623">
    <property type="term" value="F:U5 snRNA binding"/>
    <property type="evidence" value="ECO:0007669"/>
    <property type="project" value="EnsemblFungi"/>
</dbReference>
<dbReference type="GO" id="GO:0017070">
    <property type="term" value="F:U6 snRNA binding"/>
    <property type="evidence" value="ECO:0007669"/>
    <property type="project" value="EnsemblFungi"/>
</dbReference>
<dbReference type="GO" id="GO:0008298">
    <property type="term" value="P:intracellular mRNA localization"/>
    <property type="evidence" value="ECO:0007669"/>
    <property type="project" value="EnsemblFungi"/>
</dbReference>
<dbReference type="GO" id="GO:2001208">
    <property type="term" value="P:negative regulation of transcription elongation by RNA polymerase I"/>
    <property type="evidence" value="ECO:0007669"/>
    <property type="project" value="EnsemblFungi"/>
</dbReference>
<dbReference type="GO" id="GO:0010508">
    <property type="term" value="P:positive regulation of autophagy"/>
    <property type="evidence" value="ECO:0007669"/>
    <property type="project" value="EnsemblFungi"/>
</dbReference>
<dbReference type="GO" id="GO:2001209">
    <property type="term" value="P:positive regulation of transcription elongation by RNA polymerase I"/>
    <property type="evidence" value="ECO:0007669"/>
    <property type="project" value="EnsemblFungi"/>
</dbReference>
<dbReference type="GO" id="GO:0032968">
    <property type="term" value="P:positive regulation of transcription elongation by RNA polymerase II"/>
    <property type="evidence" value="ECO:0007669"/>
    <property type="project" value="EnsemblFungi"/>
</dbReference>
<dbReference type="GO" id="GO:2000232">
    <property type="term" value="P:regulation of rRNA processing"/>
    <property type="evidence" value="ECO:0007669"/>
    <property type="project" value="EnsemblFungi"/>
</dbReference>
<dbReference type="GO" id="GO:0090262">
    <property type="term" value="P:regulation of transcription-coupled nucleotide-excision repair"/>
    <property type="evidence" value="ECO:0007669"/>
    <property type="project" value="EnsemblFungi"/>
</dbReference>
<dbReference type="GO" id="GO:0000245">
    <property type="term" value="P:spliceosomal complex assembly"/>
    <property type="evidence" value="ECO:0007669"/>
    <property type="project" value="EnsemblFungi"/>
</dbReference>
<dbReference type="GO" id="GO:0006368">
    <property type="term" value="P:transcription elongation by RNA polymerase II"/>
    <property type="evidence" value="ECO:0000318"/>
    <property type="project" value="GO_Central"/>
</dbReference>
<dbReference type="GO" id="GO:0140673">
    <property type="term" value="P:transcription elongation-coupled chromatin remodeling"/>
    <property type="evidence" value="ECO:0007669"/>
    <property type="project" value="InterPro"/>
</dbReference>
<dbReference type="CDD" id="cd06081">
    <property type="entry name" value="KOW_Spt5_1"/>
    <property type="match status" value="1"/>
</dbReference>
<dbReference type="CDD" id="cd06082">
    <property type="entry name" value="KOW_Spt5_2"/>
    <property type="match status" value="1"/>
</dbReference>
<dbReference type="CDD" id="cd06083">
    <property type="entry name" value="KOW_Spt5_3"/>
    <property type="match status" value="1"/>
</dbReference>
<dbReference type="CDD" id="cd06084">
    <property type="entry name" value="KOW_Spt5_4"/>
    <property type="match status" value="1"/>
</dbReference>
<dbReference type="CDD" id="cd06085">
    <property type="entry name" value="KOW_Spt5_5"/>
    <property type="match status" value="1"/>
</dbReference>
<dbReference type="CDD" id="cd09888">
    <property type="entry name" value="NGN_Euk"/>
    <property type="match status" value="1"/>
</dbReference>
<dbReference type="FunFam" id="2.30.30.30:FF:000058">
    <property type="entry name" value="Transcription elongation factor SPT5"/>
    <property type="match status" value="1"/>
</dbReference>
<dbReference type="FunFam" id="2.30.30.30:FF:000061">
    <property type="entry name" value="Transcription elongation factor SPT5"/>
    <property type="match status" value="1"/>
</dbReference>
<dbReference type="FunFam" id="2.30.30.30:FF:000063">
    <property type="entry name" value="Transcription elongation factor SPT5"/>
    <property type="match status" value="1"/>
</dbReference>
<dbReference type="FunFam" id="3.30.70.940:FF:000005">
    <property type="entry name" value="Transcription elongation factor SPT5"/>
    <property type="match status" value="1"/>
</dbReference>
<dbReference type="Gene3D" id="2.30.30.30">
    <property type="match status" value="3"/>
</dbReference>
<dbReference type="Gene3D" id="3.30.70.940">
    <property type="entry name" value="NusG, N-terminal domain"/>
    <property type="match status" value="1"/>
</dbReference>
<dbReference type="InterPro" id="IPR005824">
    <property type="entry name" value="KOW"/>
</dbReference>
<dbReference type="InterPro" id="IPR041973">
    <property type="entry name" value="KOW_Spt5_1"/>
</dbReference>
<dbReference type="InterPro" id="IPR041975">
    <property type="entry name" value="KOW_Spt5_2"/>
</dbReference>
<dbReference type="InterPro" id="IPR041976">
    <property type="entry name" value="KOW_Spt5_3"/>
</dbReference>
<dbReference type="InterPro" id="IPR041977">
    <property type="entry name" value="KOW_Spt5_4"/>
</dbReference>
<dbReference type="InterPro" id="IPR041978">
    <property type="entry name" value="KOW_Spt5_5"/>
</dbReference>
<dbReference type="InterPro" id="IPR005100">
    <property type="entry name" value="NGN-domain"/>
</dbReference>
<dbReference type="InterPro" id="IPR006645">
    <property type="entry name" value="NGN-like_dom"/>
</dbReference>
<dbReference type="InterPro" id="IPR036735">
    <property type="entry name" value="NGN_dom_sf"/>
</dbReference>
<dbReference type="InterPro" id="IPR039385">
    <property type="entry name" value="NGN_Euk"/>
</dbReference>
<dbReference type="InterPro" id="IPR014722">
    <property type="entry name" value="Rib_uL2_dom2"/>
</dbReference>
<dbReference type="InterPro" id="IPR039659">
    <property type="entry name" value="SPT5"/>
</dbReference>
<dbReference type="InterPro" id="IPR024945">
    <property type="entry name" value="Spt5_C_dom"/>
</dbReference>
<dbReference type="InterPro" id="IPR022581">
    <property type="entry name" value="Spt5_N"/>
</dbReference>
<dbReference type="InterPro" id="IPR017071">
    <property type="entry name" value="TF_Spt5_eukaryote"/>
</dbReference>
<dbReference type="InterPro" id="IPR008991">
    <property type="entry name" value="Translation_prot_SH3-like_sf"/>
</dbReference>
<dbReference type="PANTHER" id="PTHR11125">
    <property type="entry name" value="SUPPRESSOR OF TY 5"/>
    <property type="match status" value="1"/>
</dbReference>
<dbReference type="PANTHER" id="PTHR11125:SF7">
    <property type="entry name" value="TRANSCRIPTION ELONGATION FACTOR SPT5"/>
    <property type="match status" value="1"/>
</dbReference>
<dbReference type="Pfam" id="PF12815">
    <property type="entry name" value="CTD"/>
    <property type="match status" value="1"/>
</dbReference>
<dbReference type="Pfam" id="PF23042">
    <property type="entry name" value="KOW1_SPT5"/>
    <property type="match status" value="1"/>
</dbReference>
<dbReference type="Pfam" id="PF23284">
    <property type="entry name" value="KOW2_Spt5"/>
    <property type="match status" value="1"/>
</dbReference>
<dbReference type="Pfam" id="PF23291">
    <property type="entry name" value="KOW4_SPT5"/>
    <property type="match status" value="1"/>
</dbReference>
<dbReference type="Pfam" id="PF23290">
    <property type="entry name" value="KOW5_SPT5"/>
    <property type="match status" value="1"/>
</dbReference>
<dbReference type="Pfam" id="PF23037">
    <property type="entry name" value="KOWx_SPT5"/>
    <property type="match status" value="1"/>
</dbReference>
<dbReference type="Pfam" id="PF03439">
    <property type="entry name" value="Spt5-NGN"/>
    <property type="match status" value="1"/>
</dbReference>
<dbReference type="Pfam" id="PF11942">
    <property type="entry name" value="Spt5_N"/>
    <property type="match status" value="1"/>
</dbReference>
<dbReference type="PIRSF" id="PIRSF036945">
    <property type="entry name" value="Spt5"/>
    <property type="match status" value="1"/>
</dbReference>
<dbReference type="SMART" id="SM01104">
    <property type="entry name" value="CTD"/>
    <property type="match status" value="1"/>
</dbReference>
<dbReference type="SMART" id="SM00739">
    <property type="entry name" value="KOW"/>
    <property type="match status" value="5"/>
</dbReference>
<dbReference type="SMART" id="SM00738">
    <property type="entry name" value="NGN"/>
    <property type="match status" value="1"/>
</dbReference>
<dbReference type="SUPFAM" id="SSF50104">
    <property type="entry name" value="Translation proteins SH3-like domain"/>
    <property type="match status" value="1"/>
</dbReference>
<gene>
    <name type="primary">SPT5</name>
    <name type="ordered locus">ADR187W</name>
</gene>
<protein>
    <recommendedName>
        <fullName>Transcription elongation factor SPT5</fullName>
    </recommendedName>
    <alternativeName>
        <fullName>Chromatin elongation factor SPT5</fullName>
    </alternativeName>
</protein>
<proteinExistence type="inferred from homology"/>
<evidence type="ECO:0000250" key="1"/>
<evidence type="ECO:0000256" key="2">
    <source>
        <dbReference type="SAM" id="MobiDB-lite"/>
    </source>
</evidence>
<evidence type="ECO:0000305" key="3"/>
<accession>Q759T6</accession>
<comment type="function">
    <text evidence="1">The SPT4-SPT5 complex mediates both activation and inhibition of transcription elongation, and plays a role in pre-mRNA processing. This complex seems to be important for the stability of the RNA polymerase II elongation machinery on the chromatin template but not for the inherent ability of this machinery to translocate down the gene (By similarity).</text>
</comment>
<comment type="subunit">
    <text evidence="1">Component of the SPT4-SPT5 complex. Interacts with RNA polymerase II (By similarity).</text>
</comment>
<comment type="subcellular location">
    <subcellularLocation>
        <location evidence="1">Nucleus</location>
    </subcellularLocation>
</comment>
<comment type="similarity">
    <text evidence="3">Belongs to the SPT5 family.</text>
</comment>